<organism>
    <name type="scientific">Synechococcus sp. (strain RCC307)</name>
    <dbReference type="NCBI Taxonomy" id="316278"/>
    <lineage>
        <taxon>Bacteria</taxon>
        <taxon>Bacillati</taxon>
        <taxon>Cyanobacteriota</taxon>
        <taxon>Cyanophyceae</taxon>
        <taxon>Synechococcales</taxon>
        <taxon>Synechococcaceae</taxon>
        <taxon>Synechococcus</taxon>
    </lineage>
</organism>
<accession>A5GRE1</accession>
<name>SYS_SYNR3</name>
<sequence>MLDQRLLRDNPELISQQLGRRGMEVDLTKLQLIAKQERDLEEQRSNLQAEGNRTGKEVGMLIKGGAAPDSDEVKALREKGNRIKQQVAVLEEEEKGLEAKLREQLLALPNLPSADAPEGKSEADNVEVKRWGEPRQGKDLEEHWQLADRLGLFETERSVRIAQSRFITLMGDGARLERALISFMLDLHSTKGYTEVMPPILVNSASLTGSGQLPKFAEESFRCADDDLWLTPTAEVPLTSLHRDEVIAVEQLPLKYAAYTPCFRREAGSYGRDTRGLIRLHQFNKVELYWFCHPEKSAEAHEQLTLDAEAVLEALELPYRRLELCTGDMGFSAARTYDLEVWLPGAGSYREISSCSTCGDFQARRSAIRFKEGKGTQLLHTLNGSGLAIGRTMAALLENGQQPDGSIQLPAALVPYFGRERLTPQ</sequence>
<dbReference type="EC" id="6.1.1.11" evidence="1"/>
<dbReference type="EMBL" id="CT978603">
    <property type="protein sequence ID" value="CAK27450.1"/>
    <property type="molecule type" value="Genomic_DNA"/>
</dbReference>
<dbReference type="SMR" id="A5GRE1"/>
<dbReference type="STRING" id="316278.SynRCC307_0547"/>
<dbReference type="KEGG" id="syr:SynRCC307_0547"/>
<dbReference type="eggNOG" id="COG0172">
    <property type="taxonomic scope" value="Bacteria"/>
</dbReference>
<dbReference type="HOGENOM" id="CLU_023797_1_1_3"/>
<dbReference type="OrthoDB" id="9804647at2"/>
<dbReference type="UniPathway" id="UPA00906">
    <property type="reaction ID" value="UER00895"/>
</dbReference>
<dbReference type="Proteomes" id="UP000001115">
    <property type="component" value="Chromosome"/>
</dbReference>
<dbReference type="GO" id="GO:0005737">
    <property type="term" value="C:cytoplasm"/>
    <property type="evidence" value="ECO:0007669"/>
    <property type="project" value="UniProtKB-SubCell"/>
</dbReference>
<dbReference type="GO" id="GO:0005524">
    <property type="term" value="F:ATP binding"/>
    <property type="evidence" value="ECO:0007669"/>
    <property type="project" value="UniProtKB-UniRule"/>
</dbReference>
<dbReference type="GO" id="GO:0004828">
    <property type="term" value="F:serine-tRNA ligase activity"/>
    <property type="evidence" value="ECO:0007669"/>
    <property type="project" value="UniProtKB-UniRule"/>
</dbReference>
<dbReference type="GO" id="GO:0016260">
    <property type="term" value="P:selenocysteine biosynthetic process"/>
    <property type="evidence" value="ECO:0007669"/>
    <property type="project" value="UniProtKB-UniRule"/>
</dbReference>
<dbReference type="GO" id="GO:0006434">
    <property type="term" value="P:seryl-tRNA aminoacylation"/>
    <property type="evidence" value="ECO:0007669"/>
    <property type="project" value="UniProtKB-UniRule"/>
</dbReference>
<dbReference type="CDD" id="cd00770">
    <property type="entry name" value="SerRS_core"/>
    <property type="match status" value="1"/>
</dbReference>
<dbReference type="Gene3D" id="3.30.930.10">
    <property type="entry name" value="Bira Bifunctional Protein, Domain 2"/>
    <property type="match status" value="1"/>
</dbReference>
<dbReference type="Gene3D" id="1.10.287.40">
    <property type="entry name" value="Serine-tRNA synthetase, tRNA binding domain"/>
    <property type="match status" value="1"/>
</dbReference>
<dbReference type="HAMAP" id="MF_00176">
    <property type="entry name" value="Ser_tRNA_synth_type1"/>
    <property type="match status" value="1"/>
</dbReference>
<dbReference type="InterPro" id="IPR002314">
    <property type="entry name" value="aa-tRNA-synt_IIb"/>
</dbReference>
<dbReference type="InterPro" id="IPR006195">
    <property type="entry name" value="aa-tRNA-synth_II"/>
</dbReference>
<dbReference type="InterPro" id="IPR045864">
    <property type="entry name" value="aa-tRNA-synth_II/BPL/LPL"/>
</dbReference>
<dbReference type="InterPro" id="IPR002317">
    <property type="entry name" value="Ser-tRNA-ligase_type_1"/>
</dbReference>
<dbReference type="InterPro" id="IPR015866">
    <property type="entry name" value="Ser-tRNA-synth_1_N"/>
</dbReference>
<dbReference type="InterPro" id="IPR042103">
    <property type="entry name" value="SerRS_1_N_sf"/>
</dbReference>
<dbReference type="InterPro" id="IPR033729">
    <property type="entry name" value="SerRS_core"/>
</dbReference>
<dbReference type="InterPro" id="IPR010978">
    <property type="entry name" value="tRNA-bd_arm"/>
</dbReference>
<dbReference type="NCBIfam" id="TIGR00414">
    <property type="entry name" value="serS"/>
    <property type="match status" value="1"/>
</dbReference>
<dbReference type="PANTHER" id="PTHR43697:SF1">
    <property type="entry name" value="SERINE--TRNA LIGASE"/>
    <property type="match status" value="1"/>
</dbReference>
<dbReference type="PANTHER" id="PTHR43697">
    <property type="entry name" value="SERYL-TRNA SYNTHETASE"/>
    <property type="match status" value="1"/>
</dbReference>
<dbReference type="Pfam" id="PF02403">
    <property type="entry name" value="Seryl_tRNA_N"/>
    <property type="match status" value="1"/>
</dbReference>
<dbReference type="Pfam" id="PF00587">
    <property type="entry name" value="tRNA-synt_2b"/>
    <property type="match status" value="1"/>
</dbReference>
<dbReference type="PIRSF" id="PIRSF001529">
    <property type="entry name" value="Ser-tRNA-synth_IIa"/>
    <property type="match status" value="1"/>
</dbReference>
<dbReference type="PRINTS" id="PR00981">
    <property type="entry name" value="TRNASYNTHSER"/>
</dbReference>
<dbReference type="SUPFAM" id="SSF55681">
    <property type="entry name" value="Class II aaRS and biotin synthetases"/>
    <property type="match status" value="1"/>
</dbReference>
<dbReference type="SUPFAM" id="SSF46589">
    <property type="entry name" value="tRNA-binding arm"/>
    <property type="match status" value="1"/>
</dbReference>
<dbReference type="PROSITE" id="PS50862">
    <property type="entry name" value="AA_TRNA_LIGASE_II"/>
    <property type="match status" value="1"/>
</dbReference>
<proteinExistence type="inferred from homology"/>
<keyword id="KW-0030">Aminoacyl-tRNA synthetase</keyword>
<keyword id="KW-0067">ATP-binding</keyword>
<keyword id="KW-0963">Cytoplasm</keyword>
<keyword id="KW-0436">Ligase</keyword>
<keyword id="KW-0547">Nucleotide-binding</keyword>
<keyword id="KW-0648">Protein biosynthesis</keyword>
<keyword id="KW-1185">Reference proteome</keyword>
<gene>
    <name evidence="1" type="primary">serS</name>
    <name type="ordered locus">SynRCC307_0547</name>
</gene>
<evidence type="ECO:0000255" key="1">
    <source>
        <dbReference type="HAMAP-Rule" id="MF_00176"/>
    </source>
</evidence>
<evidence type="ECO:0000256" key="2">
    <source>
        <dbReference type="SAM" id="MobiDB-lite"/>
    </source>
</evidence>
<protein>
    <recommendedName>
        <fullName evidence="1">Serine--tRNA ligase</fullName>
        <ecNumber evidence="1">6.1.1.11</ecNumber>
    </recommendedName>
    <alternativeName>
        <fullName evidence="1">Seryl-tRNA synthetase</fullName>
        <shortName evidence="1">SerRS</shortName>
    </alternativeName>
    <alternativeName>
        <fullName evidence="1">Seryl-tRNA(Ser/Sec) synthetase</fullName>
    </alternativeName>
</protein>
<reference key="1">
    <citation type="submission" date="2006-05" db="EMBL/GenBank/DDBJ databases">
        <authorList>
            <consortium name="Genoscope"/>
        </authorList>
    </citation>
    <scope>NUCLEOTIDE SEQUENCE [LARGE SCALE GENOMIC DNA]</scope>
    <source>
        <strain>RCC307</strain>
    </source>
</reference>
<comment type="function">
    <text evidence="1">Catalyzes the attachment of serine to tRNA(Ser). Is also able to aminoacylate tRNA(Sec) with serine, to form the misacylated tRNA L-seryl-tRNA(Sec), which will be further converted into selenocysteinyl-tRNA(Sec).</text>
</comment>
<comment type="catalytic activity">
    <reaction evidence="1">
        <text>tRNA(Ser) + L-serine + ATP = L-seryl-tRNA(Ser) + AMP + diphosphate + H(+)</text>
        <dbReference type="Rhea" id="RHEA:12292"/>
        <dbReference type="Rhea" id="RHEA-COMP:9669"/>
        <dbReference type="Rhea" id="RHEA-COMP:9703"/>
        <dbReference type="ChEBI" id="CHEBI:15378"/>
        <dbReference type="ChEBI" id="CHEBI:30616"/>
        <dbReference type="ChEBI" id="CHEBI:33019"/>
        <dbReference type="ChEBI" id="CHEBI:33384"/>
        <dbReference type="ChEBI" id="CHEBI:78442"/>
        <dbReference type="ChEBI" id="CHEBI:78533"/>
        <dbReference type="ChEBI" id="CHEBI:456215"/>
        <dbReference type="EC" id="6.1.1.11"/>
    </reaction>
</comment>
<comment type="catalytic activity">
    <reaction evidence="1">
        <text>tRNA(Sec) + L-serine + ATP = L-seryl-tRNA(Sec) + AMP + diphosphate + H(+)</text>
        <dbReference type="Rhea" id="RHEA:42580"/>
        <dbReference type="Rhea" id="RHEA-COMP:9742"/>
        <dbReference type="Rhea" id="RHEA-COMP:10128"/>
        <dbReference type="ChEBI" id="CHEBI:15378"/>
        <dbReference type="ChEBI" id="CHEBI:30616"/>
        <dbReference type="ChEBI" id="CHEBI:33019"/>
        <dbReference type="ChEBI" id="CHEBI:33384"/>
        <dbReference type="ChEBI" id="CHEBI:78442"/>
        <dbReference type="ChEBI" id="CHEBI:78533"/>
        <dbReference type="ChEBI" id="CHEBI:456215"/>
        <dbReference type="EC" id="6.1.1.11"/>
    </reaction>
</comment>
<comment type="pathway">
    <text evidence="1">Aminoacyl-tRNA biosynthesis; selenocysteinyl-tRNA(Sec) biosynthesis; L-seryl-tRNA(Sec) from L-serine and tRNA(Sec): step 1/1.</text>
</comment>
<comment type="subunit">
    <text evidence="1">Homodimer. The tRNA molecule binds across the dimer.</text>
</comment>
<comment type="subcellular location">
    <subcellularLocation>
        <location evidence="1">Cytoplasm</location>
    </subcellularLocation>
</comment>
<comment type="domain">
    <text evidence="1">Consists of two distinct domains, a catalytic core and a N-terminal extension that is involved in tRNA binding.</text>
</comment>
<comment type="similarity">
    <text evidence="1">Belongs to the class-II aminoacyl-tRNA synthetase family. Type-1 seryl-tRNA synthetase subfamily.</text>
</comment>
<feature type="chain" id="PRO_1000019850" description="Serine--tRNA ligase">
    <location>
        <begin position="1"/>
        <end position="425"/>
    </location>
</feature>
<feature type="region of interest" description="Disordered" evidence="2">
    <location>
        <begin position="110"/>
        <end position="134"/>
    </location>
</feature>
<feature type="compositionally biased region" description="Basic and acidic residues" evidence="2">
    <location>
        <begin position="117"/>
        <end position="134"/>
    </location>
</feature>
<feature type="binding site" evidence="1">
    <location>
        <begin position="233"/>
        <end position="235"/>
    </location>
    <ligand>
        <name>L-serine</name>
        <dbReference type="ChEBI" id="CHEBI:33384"/>
    </ligand>
</feature>
<feature type="binding site" evidence="1">
    <location>
        <begin position="264"/>
        <end position="266"/>
    </location>
    <ligand>
        <name>ATP</name>
        <dbReference type="ChEBI" id="CHEBI:30616"/>
    </ligand>
</feature>
<feature type="binding site" evidence="1">
    <location>
        <position position="287"/>
    </location>
    <ligand>
        <name>L-serine</name>
        <dbReference type="ChEBI" id="CHEBI:33384"/>
    </ligand>
</feature>
<feature type="binding site" evidence="1">
    <location>
        <begin position="351"/>
        <end position="354"/>
    </location>
    <ligand>
        <name>ATP</name>
        <dbReference type="ChEBI" id="CHEBI:30616"/>
    </ligand>
</feature>
<feature type="binding site" evidence="1">
    <location>
        <position position="385"/>
    </location>
    <ligand>
        <name>L-serine</name>
        <dbReference type="ChEBI" id="CHEBI:33384"/>
    </ligand>
</feature>